<sequence>MRLRLPVVCFLWEIAMIVLFGIFVRYNDEADPHWSEFMKAQNITSDIQNDYYFRYPSFQDVHVMIFVGFGFLMTFLKRYGFGSVAFNFLLAAFGIQWAILMQGWFHTFKNGKILIGVESLINADFCVGSVCIAFGAILGKVSPVQIMVMTLFQVTLFAVNEWILLNLLHVNDAGGSMTIHTFGAYFGLTVAWILNRPRLKQTNDKEGSVYVSDLFSMIGTLFLWMFWPSFNSAVSYHGDAQHRAAINTYCSLAACVLTTVAISSVVNKKGKLEMVHIQNATLAGGVAVGTAAEMMLTPYGSLIVGFICGIVSTLGFTYCSPFLSNKLRLHDTCGIHNLHAMPGLIGGIVGAVTAACATEAVYTADGLKKMFRFEGDYATRTPSMQGGYQAAGLCVSLAFGLVGGTVVGCILKLPIWGDPSDENCFDDEVYWELPEEDEEEHLGAANQYVTHLPENFKLPDRTEVAFK</sequence>
<protein>
    <recommendedName>
        <fullName>Ammonium transporter Rh type C</fullName>
    </recommendedName>
    <alternativeName>
        <fullName>Rhesus blood group family type C glycoprotein</fullName>
        <shortName>Rh family type C glycoprotein</shortName>
        <shortName>Rh type C glycoprotein</shortName>
    </alternativeName>
</protein>
<accession>Q6WRY0</accession>
<evidence type="ECO:0000250" key="1"/>
<evidence type="ECO:0000255" key="2"/>
<evidence type="ECO:0000305" key="3"/>
<name>RHCG_XENTR</name>
<reference key="1">
    <citation type="journal article" date="2005" name="Proc. Natl. Acad. Sci. U.S.A.">
        <title>Evolutionary conservation and diversification of Rh family genes and proteins.</title>
        <authorList>
            <person name="Huang C.-H."/>
            <person name="Peng J."/>
        </authorList>
    </citation>
    <scope>NUCLEOTIDE SEQUENCE [MRNA]</scope>
</reference>
<comment type="function">
    <text evidence="1">Functions as an ammonia transporter.</text>
</comment>
<comment type="subunit">
    <text>Homotrimer.</text>
</comment>
<comment type="subcellular location">
    <subcellularLocation>
        <location evidence="1">Apical cell membrane</location>
        <topology evidence="1">Multi-pass membrane protein</topology>
    </subcellularLocation>
</comment>
<comment type="similarity">
    <text evidence="3">Belongs to the ammonium transporter (TC 2.A.49) family. Rh subfamily.</text>
</comment>
<keyword id="KW-0924">Ammonia transport</keyword>
<keyword id="KW-1003">Cell membrane</keyword>
<keyword id="KW-0325">Glycoprotein</keyword>
<keyword id="KW-0472">Membrane</keyword>
<keyword id="KW-1185">Reference proteome</keyword>
<keyword id="KW-0812">Transmembrane</keyword>
<keyword id="KW-1133">Transmembrane helix</keyword>
<keyword id="KW-0813">Transport</keyword>
<gene>
    <name type="primary">rhcg</name>
</gene>
<dbReference type="EMBL" id="AY271818">
    <property type="protein sequence ID" value="AAQ02688.1"/>
    <property type="molecule type" value="mRNA"/>
</dbReference>
<dbReference type="RefSeq" id="NP_001003661.1">
    <property type="nucleotide sequence ID" value="NM_001003661.1"/>
</dbReference>
<dbReference type="SMR" id="Q6WRY0"/>
<dbReference type="FunCoup" id="Q6WRY0">
    <property type="interactions" value="83"/>
</dbReference>
<dbReference type="STRING" id="8364.ENSXETP00000051095"/>
<dbReference type="GlyCosmos" id="Q6WRY0">
    <property type="glycosylation" value="1 site, No reported glycans"/>
</dbReference>
<dbReference type="PaxDb" id="8364-ENSXETP00000063691"/>
<dbReference type="GeneID" id="445260"/>
<dbReference type="KEGG" id="xtr:445260"/>
<dbReference type="AGR" id="Xenbase:XB-GENE-949430"/>
<dbReference type="CTD" id="51458"/>
<dbReference type="Xenbase" id="XB-GENE-949430">
    <property type="gene designation" value="rhcg"/>
</dbReference>
<dbReference type="eggNOG" id="KOG3796">
    <property type="taxonomic scope" value="Eukaryota"/>
</dbReference>
<dbReference type="HOGENOM" id="CLU_021386_0_0_1"/>
<dbReference type="InParanoid" id="Q6WRY0"/>
<dbReference type="OrthoDB" id="534912at2759"/>
<dbReference type="Reactome" id="R-XTR-444411">
    <property type="pathway name" value="Rhesus glycoproteins mediate ammonium transport"/>
</dbReference>
<dbReference type="Proteomes" id="UP000008143">
    <property type="component" value="Chromosome 3"/>
</dbReference>
<dbReference type="GO" id="GO:0016324">
    <property type="term" value="C:apical plasma membrane"/>
    <property type="evidence" value="ECO:0000250"/>
    <property type="project" value="UniProtKB"/>
</dbReference>
<dbReference type="GO" id="GO:0008519">
    <property type="term" value="F:ammonium channel activity"/>
    <property type="evidence" value="ECO:0007669"/>
    <property type="project" value="InterPro"/>
</dbReference>
<dbReference type="GO" id="GO:0072488">
    <property type="term" value="P:ammonium transmembrane transport"/>
    <property type="evidence" value="ECO:0000250"/>
    <property type="project" value="UniProtKB"/>
</dbReference>
<dbReference type="FunFam" id="1.10.3430.10:FF:000001">
    <property type="entry name" value="Ammonium transporter Rh type C"/>
    <property type="match status" value="1"/>
</dbReference>
<dbReference type="Gene3D" id="1.10.3430.10">
    <property type="entry name" value="Ammonium transporter AmtB like domains"/>
    <property type="match status" value="1"/>
</dbReference>
<dbReference type="InterPro" id="IPR029020">
    <property type="entry name" value="Ammonium/urea_transptr"/>
</dbReference>
<dbReference type="InterPro" id="IPR024041">
    <property type="entry name" value="NH4_transpt_AmtB-like_dom"/>
</dbReference>
<dbReference type="InterPro" id="IPR002229">
    <property type="entry name" value="RhesusRHD"/>
</dbReference>
<dbReference type="PANTHER" id="PTHR11730">
    <property type="entry name" value="AMMONIUM TRANSPORTER"/>
    <property type="match status" value="1"/>
</dbReference>
<dbReference type="PANTHER" id="PTHR11730:SF30">
    <property type="entry name" value="AMMONIUM TRANSPORTER RH TYPE C"/>
    <property type="match status" value="1"/>
</dbReference>
<dbReference type="Pfam" id="PF00909">
    <property type="entry name" value="Ammonium_transp"/>
    <property type="match status" value="1"/>
</dbReference>
<dbReference type="PRINTS" id="PR00342">
    <property type="entry name" value="RHESUSRHD"/>
</dbReference>
<dbReference type="SUPFAM" id="SSF111352">
    <property type="entry name" value="Ammonium transporter"/>
    <property type="match status" value="1"/>
</dbReference>
<proteinExistence type="evidence at transcript level"/>
<feature type="chain" id="PRO_0000283593" description="Ammonium transporter Rh type C">
    <location>
        <begin position="1"/>
        <end position="467"/>
    </location>
</feature>
<feature type="topological domain" description="Cytoplasmic" evidence="2">
    <location>
        <begin position="1"/>
        <end position="3"/>
    </location>
</feature>
<feature type="transmembrane region" description="Helical" evidence="2">
    <location>
        <begin position="4"/>
        <end position="24"/>
    </location>
</feature>
<feature type="topological domain" description="Extracellular" evidence="2">
    <location>
        <begin position="25"/>
        <end position="55"/>
    </location>
</feature>
<feature type="transmembrane region" description="Helical" evidence="2">
    <location>
        <begin position="56"/>
        <end position="76"/>
    </location>
</feature>
<feature type="topological domain" description="Cytoplasmic" evidence="2">
    <location>
        <begin position="77"/>
        <end position="80"/>
    </location>
</feature>
<feature type="transmembrane region" description="Helical" evidence="2">
    <location>
        <begin position="81"/>
        <end position="101"/>
    </location>
</feature>
<feature type="topological domain" description="Extracellular" evidence="2">
    <location>
        <begin position="102"/>
        <end position="119"/>
    </location>
</feature>
<feature type="transmembrane region" description="Helical" evidence="2">
    <location>
        <begin position="120"/>
        <end position="139"/>
    </location>
</feature>
<feature type="topological domain" description="Cytoplasmic" evidence="2">
    <location>
        <begin position="140"/>
        <end position="145"/>
    </location>
</feature>
<feature type="transmembrane region" description="Helical" evidence="2">
    <location>
        <begin position="146"/>
        <end position="168"/>
    </location>
</feature>
<feature type="topological domain" description="Extracellular" evidence="2">
    <location>
        <begin position="169"/>
        <end position="173"/>
    </location>
</feature>
<feature type="transmembrane region" description="Helical" evidence="2">
    <location>
        <begin position="174"/>
        <end position="194"/>
    </location>
</feature>
<feature type="topological domain" description="Cytoplasmic" evidence="2">
    <location>
        <begin position="195"/>
        <end position="213"/>
    </location>
</feature>
<feature type="transmembrane region" description="Helical" evidence="2">
    <location>
        <begin position="214"/>
        <end position="234"/>
    </location>
</feature>
<feature type="topological domain" description="Extracellular" evidence="2">
    <location>
        <begin position="235"/>
        <end position="245"/>
    </location>
</feature>
<feature type="transmembrane region" description="Helical" evidence="2">
    <location>
        <begin position="246"/>
        <end position="266"/>
    </location>
</feature>
<feature type="topological domain" description="Cytoplasmic" evidence="2">
    <location>
        <begin position="267"/>
        <end position="271"/>
    </location>
</feature>
<feature type="transmembrane region" description="Helical" evidence="2">
    <location>
        <begin position="272"/>
        <end position="292"/>
    </location>
</feature>
<feature type="topological domain" description="Extracellular" evidence="2">
    <location>
        <begin position="293"/>
        <end position="295"/>
    </location>
</feature>
<feature type="transmembrane region" description="Helical" evidence="2">
    <location>
        <begin position="296"/>
        <end position="316"/>
    </location>
</feature>
<feature type="topological domain" description="Cytoplasmic" evidence="2">
    <location>
        <begin position="317"/>
        <end position="337"/>
    </location>
</feature>
<feature type="transmembrane region" description="Helical" evidence="2">
    <location>
        <begin position="338"/>
        <end position="358"/>
    </location>
</feature>
<feature type="topological domain" description="Extracellular" evidence="2">
    <location>
        <begin position="359"/>
        <end position="390"/>
    </location>
</feature>
<feature type="transmembrane region" description="Helical" evidence="2">
    <location>
        <begin position="391"/>
        <end position="411"/>
    </location>
</feature>
<feature type="topological domain" description="Cytoplasmic" evidence="2">
    <location>
        <begin position="412"/>
        <end position="467"/>
    </location>
</feature>
<feature type="glycosylation site" description="N-linked (GlcNAc...) asparagine" evidence="2">
    <location>
        <position position="42"/>
    </location>
</feature>
<organism>
    <name type="scientific">Xenopus tropicalis</name>
    <name type="common">Western clawed frog</name>
    <name type="synonym">Silurana tropicalis</name>
    <dbReference type="NCBI Taxonomy" id="8364"/>
    <lineage>
        <taxon>Eukaryota</taxon>
        <taxon>Metazoa</taxon>
        <taxon>Chordata</taxon>
        <taxon>Craniata</taxon>
        <taxon>Vertebrata</taxon>
        <taxon>Euteleostomi</taxon>
        <taxon>Amphibia</taxon>
        <taxon>Batrachia</taxon>
        <taxon>Anura</taxon>
        <taxon>Pipoidea</taxon>
        <taxon>Pipidae</taxon>
        <taxon>Xenopodinae</taxon>
        <taxon>Xenopus</taxon>
        <taxon>Silurana</taxon>
    </lineage>
</organism>